<comment type="function">
    <text evidence="1">Part of the phosphoribosylformylglycinamidine synthase complex involved in the purines biosynthetic pathway. Catalyzes the ATP-dependent conversion of formylglycinamide ribonucleotide (FGAR) and glutamine to yield formylglycinamidine ribonucleotide (FGAM) and glutamate. The FGAM synthase complex is composed of three subunits. PurQ produces an ammonia molecule by converting glutamine to glutamate. PurL transfers the ammonia molecule to FGAR to form FGAM in an ATP-dependent manner. PurS interacts with PurQ and PurL and is thought to assist in the transfer of the ammonia molecule from PurQ to PurL.</text>
</comment>
<comment type="catalytic activity">
    <reaction evidence="1">
        <text>N(2)-formyl-N(1)-(5-phospho-beta-D-ribosyl)glycinamide + L-glutamine + ATP + H2O = 2-formamido-N(1)-(5-O-phospho-beta-D-ribosyl)acetamidine + L-glutamate + ADP + phosphate + H(+)</text>
        <dbReference type="Rhea" id="RHEA:17129"/>
        <dbReference type="ChEBI" id="CHEBI:15377"/>
        <dbReference type="ChEBI" id="CHEBI:15378"/>
        <dbReference type="ChEBI" id="CHEBI:29985"/>
        <dbReference type="ChEBI" id="CHEBI:30616"/>
        <dbReference type="ChEBI" id="CHEBI:43474"/>
        <dbReference type="ChEBI" id="CHEBI:58359"/>
        <dbReference type="ChEBI" id="CHEBI:147286"/>
        <dbReference type="ChEBI" id="CHEBI:147287"/>
        <dbReference type="ChEBI" id="CHEBI:456216"/>
        <dbReference type="EC" id="6.3.5.3"/>
    </reaction>
</comment>
<comment type="catalytic activity">
    <reaction evidence="1">
        <text>L-glutamine + H2O = L-glutamate + NH4(+)</text>
        <dbReference type="Rhea" id="RHEA:15889"/>
        <dbReference type="ChEBI" id="CHEBI:15377"/>
        <dbReference type="ChEBI" id="CHEBI:28938"/>
        <dbReference type="ChEBI" id="CHEBI:29985"/>
        <dbReference type="ChEBI" id="CHEBI:58359"/>
        <dbReference type="EC" id="3.5.1.2"/>
    </reaction>
</comment>
<comment type="pathway">
    <text evidence="1">Purine metabolism; IMP biosynthesis via de novo pathway; 5-amino-1-(5-phospho-D-ribosyl)imidazole from N(2)-formyl-N(1)-(5-phospho-D-ribosyl)glycinamide: step 1/2.</text>
</comment>
<comment type="subunit">
    <text evidence="1">Part of the FGAM synthase complex composed of 1 PurL, 1 PurQ and 2 PurS subunits.</text>
</comment>
<comment type="subcellular location">
    <subcellularLocation>
        <location evidence="1">Cytoplasm</location>
    </subcellularLocation>
</comment>
<reference key="1">
    <citation type="journal article" date="2006" name="Appl. Environ. Microbiol.">
        <title>Genome sequence of the chemolithoautotrophic nitrite-oxidizing bacterium Nitrobacter winogradskyi Nb-255.</title>
        <authorList>
            <person name="Starkenburg S.R."/>
            <person name="Chain P.S.G."/>
            <person name="Sayavedra-Soto L.A."/>
            <person name="Hauser L."/>
            <person name="Land M.L."/>
            <person name="Larimer F.W."/>
            <person name="Malfatti S.A."/>
            <person name="Klotz M.G."/>
            <person name="Bottomley P.J."/>
            <person name="Arp D.J."/>
            <person name="Hickey W.J."/>
        </authorList>
    </citation>
    <scope>NUCLEOTIDE SEQUENCE [LARGE SCALE GENOMIC DNA]</scope>
    <source>
        <strain>ATCC 25391 / DSM 10237 / CIP 104748 / NCIMB 11846 / Nb-255</strain>
    </source>
</reference>
<sequence length="233" mass="25000">MKSAVLVFPGINRERDMARALRLVSGREPAMVWHAETSLPEGTDLVVAPGGFSYGDYLRCGAIAARAPVMDAVRAFASDGGLVLGVCNGFQILCESGLLPGILMRNARLKFICHDVHLRVERSDTPFTRGYNAGQVIRVPVAHGEGNYAADEDTIRRLEGEGRVLYRYCSASGEVGDTHNINGAAQSIAGIVNERGNVLGMMPHPENHVEDIMGCTDGRGLFAGLVAHLERAA</sequence>
<protein>
    <recommendedName>
        <fullName evidence="1">Phosphoribosylformylglycinamidine synthase subunit PurQ</fullName>
        <shortName evidence="1">FGAM synthase</shortName>
        <ecNumber evidence="1">6.3.5.3</ecNumber>
    </recommendedName>
    <alternativeName>
        <fullName evidence="1">Formylglycinamide ribonucleotide amidotransferase subunit I</fullName>
        <shortName evidence="1">FGAR amidotransferase I</shortName>
        <shortName evidence="1">FGAR-AT I</shortName>
    </alternativeName>
    <alternativeName>
        <fullName evidence="1">Glutaminase PurQ</fullName>
        <ecNumber evidence="1">3.5.1.2</ecNumber>
    </alternativeName>
    <alternativeName>
        <fullName evidence="1">Phosphoribosylformylglycinamidine synthase subunit I</fullName>
    </alternativeName>
</protein>
<dbReference type="EC" id="6.3.5.3" evidence="1"/>
<dbReference type="EC" id="3.5.1.2" evidence="1"/>
<dbReference type="EMBL" id="CP000115">
    <property type="protein sequence ID" value="ABA04567.1"/>
    <property type="molecule type" value="Genomic_DNA"/>
</dbReference>
<dbReference type="RefSeq" id="WP_011314587.1">
    <property type="nucleotide sequence ID" value="NC_007406.1"/>
</dbReference>
<dbReference type="SMR" id="Q3ST24"/>
<dbReference type="STRING" id="323098.Nwi_1306"/>
<dbReference type="KEGG" id="nwi:Nwi_1306"/>
<dbReference type="eggNOG" id="COG0047">
    <property type="taxonomic scope" value="Bacteria"/>
</dbReference>
<dbReference type="HOGENOM" id="CLU_001031_3_1_5"/>
<dbReference type="OrthoDB" id="9804441at2"/>
<dbReference type="UniPathway" id="UPA00074">
    <property type="reaction ID" value="UER00128"/>
</dbReference>
<dbReference type="Proteomes" id="UP000002531">
    <property type="component" value="Chromosome"/>
</dbReference>
<dbReference type="GO" id="GO:0005737">
    <property type="term" value="C:cytoplasm"/>
    <property type="evidence" value="ECO:0007669"/>
    <property type="project" value="UniProtKB-SubCell"/>
</dbReference>
<dbReference type="GO" id="GO:0005524">
    <property type="term" value="F:ATP binding"/>
    <property type="evidence" value="ECO:0007669"/>
    <property type="project" value="UniProtKB-KW"/>
</dbReference>
<dbReference type="GO" id="GO:0004359">
    <property type="term" value="F:glutaminase activity"/>
    <property type="evidence" value="ECO:0007669"/>
    <property type="project" value="UniProtKB-EC"/>
</dbReference>
<dbReference type="GO" id="GO:0004642">
    <property type="term" value="F:phosphoribosylformylglycinamidine synthase activity"/>
    <property type="evidence" value="ECO:0007669"/>
    <property type="project" value="UniProtKB-UniRule"/>
</dbReference>
<dbReference type="GO" id="GO:0006189">
    <property type="term" value="P:'de novo' IMP biosynthetic process"/>
    <property type="evidence" value="ECO:0007669"/>
    <property type="project" value="UniProtKB-UniRule"/>
</dbReference>
<dbReference type="CDD" id="cd01740">
    <property type="entry name" value="GATase1_FGAR_AT"/>
    <property type="match status" value="1"/>
</dbReference>
<dbReference type="Gene3D" id="3.40.50.880">
    <property type="match status" value="1"/>
</dbReference>
<dbReference type="HAMAP" id="MF_00421">
    <property type="entry name" value="PurQ"/>
    <property type="match status" value="1"/>
</dbReference>
<dbReference type="InterPro" id="IPR029062">
    <property type="entry name" value="Class_I_gatase-like"/>
</dbReference>
<dbReference type="InterPro" id="IPR010075">
    <property type="entry name" value="PRibForGlyAmidine_synth_PurQ"/>
</dbReference>
<dbReference type="NCBIfam" id="TIGR01737">
    <property type="entry name" value="FGAM_synth_I"/>
    <property type="match status" value="1"/>
</dbReference>
<dbReference type="NCBIfam" id="NF002957">
    <property type="entry name" value="PRK03619.1"/>
    <property type="match status" value="1"/>
</dbReference>
<dbReference type="PANTHER" id="PTHR47552">
    <property type="entry name" value="PHOSPHORIBOSYLFORMYLGLYCINAMIDINE SYNTHASE SUBUNIT PURQ"/>
    <property type="match status" value="1"/>
</dbReference>
<dbReference type="PANTHER" id="PTHR47552:SF1">
    <property type="entry name" value="PHOSPHORIBOSYLFORMYLGLYCINAMIDINE SYNTHASE SUBUNIT PURQ"/>
    <property type="match status" value="1"/>
</dbReference>
<dbReference type="Pfam" id="PF13507">
    <property type="entry name" value="GATase_5"/>
    <property type="match status" value="1"/>
</dbReference>
<dbReference type="PIRSF" id="PIRSF001586">
    <property type="entry name" value="FGAM_synth_I"/>
    <property type="match status" value="1"/>
</dbReference>
<dbReference type="SMART" id="SM01211">
    <property type="entry name" value="GATase_5"/>
    <property type="match status" value="1"/>
</dbReference>
<dbReference type="SUPFAM" id="SSF52317">
    <property type="entry name" value="Class I glutamine amidotransferase-like"/>
    <property type="match status" value="1"/>
</dbReference>
<dbReference type="PROSITE" id="PS51273">
    <property type="entry name" value="GATASE_TYPE_1"/>
    <property type="match status" value="1"/>
</dbReference>
<evidence type="ECO:0000255" key="1">
    <source>
        <dbReference type="HAMAP-Rule" id="MF_00421"/>
    </source>
</evidence>
<accession>Q3ST24</accession>
<organism>
    <name type="scientific">Nitrobacter winogradskyi (strain ATCC 25391 / DSM 10237 / CIP 104748 / NCIMB 11846 / Nb-255)</name>
    <dbReference type="NCBI Taxonomy" id="323098"/>
    <lineage>
        <taxon>Bacteria</taxon>
        <taxon>Pseudomonadati</taxon>
        <taxon>Pseudomonadota</taxon>
        <taxon>Alphaproteobacteria</taxon>
        <taxon>Hyphomicrobiales</taxon>
        <taxon>Nitrobacteraceae</taxon>
        <taxon>Nitrobacter</taxon>
    </lineage>
</organism>
<proteinExistence type="inferred from homology"/>
<feature type="chain" id="PRO_0000252714" description="Phosphoribosylformylglycinamidine synthase subunit PurQ">
    <location>
        <begin position="1"/>
        <end position="233"/>
    </location>
</feature>
<feature type="domain" description="Glutamine amidotransferase type-1" evidence="1">
    <location>
        <begin position="3"/>
        <end position="233"/>
    </location>
</feature>
<feature type="active site" description="Nucleophile" evidence="1">
    <location>
        <position position="87"/>
    </location>
</feature>
<feature type="active site" evidence="1">
    <location>
        <position position="204"/>
    </location>
</feature>
<feature type="active site" evidence="1">
    <location>
        <position position="206"/>
    </location>
</feature>
<gene>
    <name evidence="1" type="primary">purQ</name>
    <name type="ordered locus">Nwi_1306</name>
</gene>
<name>PURQ_NITWN</name>
<keyword id="KW-0067">ATP-binding</keyword>
<keyword id="KW-0963">Cytoplasm</keyword>
<keyword id="KW-0315">Glutamine amidotransferase</keyword>
<keyword id="KW-0378">Hydrolase</keyword>
<keyword id="KW-0436">Ligase</keyword>
<keyword id="KW-0547">Nucleotide-binding</keyword>
<keyword id="KW-0658">Purine biosynthesis</keyword>
<keyword id="KW-1185">Reference proteome</keyword>